<name>SYK_SYNSC</name>
<comment type="catalytic activity">
    <reaction evidence="1">
        <text>tRNA(Lys) + L-lysine + ATP = L-lysyl-tRNA(Lys) + AMP + diphosphate</text>
        <dbReference type="Rhea" id="RHEA:20792"/>
        <dbReference type="Rhea" id="RHEA-COMP:9696"/>
        <dbReference type="Rhea" id="RHEA-COMP:9697"/>
        <dbReference type="ChEBI" id="CHEBI:30616"/>
        <dbReference type="ChEBI" id="CHEBI:32551"/>
        <dbReference type="ChEBI" id="CHEBI:33019"/>
        <dbReference type="ChEBI" id="CHEBI:78442"/>
        <dbReference type="ChEBI" id="CHEBI:78529"/>
        <dbReference type="ChEBI" id="CHEBI:456215"/>
        <dbReference type="EC" id="6.1.1.6"/>
    </reaction>
</comment>
<comment type="cofactor">
    <cofactor evidence="1">
        <name>Mg(2+)</name>
        <dbReference type="ChEBI" id="CHEBI:18420"/>
    </cofactor>
    <text evidence="1">Binds 3 Mg(2+) ions per subunit.</text>
</comment>
<comment type="subunit">
    <text evidence="1">Homodimer.</text>
</comment>
<comment type="subcellular location">
    <subcellularLocation>
        <location evidence="1">Cytoplasm</location>
    </subcellularLocation>
</comment>
<comment type="similarity">
    <text evidence="1">Belongs to the class-II aminoacyl-tRNA synthetase family.</text>
</comment>
<feature type="chain" id="PRO_1000012956" description="Lysine--tRNA ligase">
    <location>
        <begin position="1"/>
        <end position="502"/>
    </location>
</feature>
<feature type="binding site" evidence="1">
    <location>
        <position position="403"/>
    </location>
    <ligand>
        <name>Mg(2+)</name>
        <dbReference type="ChEBI" id="CHEBI:18420"/>
        <label>1</label>
    </ligand>
</feature>
<feature type="binding site" evidence="1">
    <location>
        <position position="410"/>
    </location>
    <ligand>
        <name>Mg(2+)</name>
        <dbReference type="ChEBI" id="CHEBI:18420"/>
        <label>1</label>
    </ligand>
</feature>
<feature type="binding site" evidence="1">
    <location>
        <position position="410"/>
    </location>
    <ligand>
        <name>Mg(2+)</name>
        <dbReference type="ChEBI" id="CHEBI:18420"/>
        <label>2</label>
    </ligand>
</feature>
<accession>Q3ANE6</accession>
<proteinExistence type="inferred from homology"/>
<gene>
    <name evidence="1" type="primary">lysS</name>
    <name type="ordered locus">Syncc9605_0110</name>
</gene>
<keyword id="KW-0030">Aminoacyl-tRNA synthetase</keyword>
<keyword id="KW-0067">ATP-binding</keyword>
<keyword id="KW-0963">Cytoplasm</keyword>
<keyword id="KW-0436">Ligase</keyword>
<keyword id="KW-0460">Magnesium</keyword>
<keyword id="KW-0479">Metal-binding</keyword>
<keyword id="KW-0547">Nucleotide-binding</keyword>
<keyword id="KW-0648">Protein biosynthesis</keyword>
<reference key="1">
    <citation type="submission" date="2005-07" db="EMBL/GenBank/DDBJ databases">
        <title>Complete sequence of Synechococcus sp. CC9605.</title>
        <authorList>
            <consortium name="US DOE Joint Genome Institute"/>
            <person name="Copeland A."/>
            <person name="Lucas S."/>
            <person name="Lapidus A."/>
            <person name="Barry K."/>
            <person name="Detter J.C."/>
            <person name="Glavina T."/>
            <person name="Hammon N."/>
            <person name="Israni S."/>
            <person name="Pitluck S."/>
            <person name="Schmutz J."/>
            <person name="Martinez M."/>
            <person name="Larimer F."/>
            <person name="Land M."/>
            <person name="Kyrpides N."/>
            <person name="Ivanova N."/>
            <person name="Richardson P."/>
        </authorList>
    </citation>
    <scope>NUCLEOTIDE SEQUENCE [LARGE SCALE GENOMIC DNA]</scope>
    <source>
        <strain>CC9605</strain>
    </source>
</reference>
<protein>
    <recommendedName>
        <fullName evidence="1">Lysine--tRNA ligase</fullName>
        <ecNumber evidence="1">6.1.1.6</ecNumber>
    </recommendedName>
    <alternativeName>
        <fullName evidence="1">Lysyl-tRNA synthetase</fullName>
        <shortName evidence="1">LysRS</shortName>
    </alternativeName>
</protein>
<evidence type="ECO:0000255" key="1">
    <source>
        <dbReference type="HAMAP-Rule" id="MF_00252"/>
    </source>
</evidence>
<organism>
    <name type="scientific">Synechococcus sp. (strain CC9605)</name>
    <dbReference type="NCBI Taxonomy" id="110662"/>
    <lineage>
        <taxon>Bacteria</taxon>
        <taxon>Bacillati</taxon>
        <taxon>Cyanobacteriota</taxon>
        <taxon>Cyanophyceae</taxon>
        <taxon>Synechococcales</taxon>
        <taxon>Synechococcaceae</taxon>
        <taxon>Synechococcus</taxon>
    </lineage>
</organism>
<sequence>MSELRDTRLEKARTLEELGQGPYALTFSPSHRMAELQVTHADLPKGEERDVSVSVAGRVMTRRVMGKLAFFTLADETGSIQLFLEKAGLEAQQEGWFKQITSLVDSGDWLGVSGTLRRTDRGELSVKVSDWRMLTKALQPLPDKWHGLADVEKRYRQRYLDLVVSPDSRETFRRRARLVSGIRRWLDQRDFLEIETPVLQSEPGGADARPFETHHNALDLPLTLRIATELHLKRLVVGGFERVYELGRIFRNEGVSTRHNPEFTSVEIYQAYSDYVGMMELTEQMVSAVCEEVCGTTTITYQGTEIDLAPPWRRATMHELVQDATGLDFNGFSSREEAAAAMTAKGLHAPELADSVGRLLNEAFEQAVETTLIQPTFVTDYPVEISPLARPHRSKPGLVERFELFIVGREHANAFSELTDPVDQRQRLEAQQARKAAGDLEAQGLDEDFVMALEVGMPPTGGLGIGIDRLVMLLTDCPSIRDVIAFPLLRPESRKGEPPSVE</sequence>
<dbReference type="EC" id="6.1.1.6" evidence="1"/>
<dbReference type="EMBL" id="CP000110">
    <property type="protein sequence ID" value="ABB33886.1"/>
    <property type="molecule type" value="Genomic_DNA"/>
</dbReference>
<dbReference type="RefSeq" id="WP_011363146.1">
    <property type="nucleotide sequence ID" value="NC_007516.1"/>
</dbReference>
<dbReference type="SMR" id="Q3ANE6"/>
<dbReference type="STRING" id="110662.Syncc9605_0110"/>
<dbReference type="KEGG" id="syd:Syncc9605_0110"/>
<dbReference type="eggNOG" id="COG1190">
    <property type="taxonomic scope" value="Bacteria"/>
</dbReference>
<dbReference type="HOGENOM" id="CLU_008255_6_0_3"/>
<dbReference type="OrthoDB" id="9802326at2"/>
<dbReference type="GO" id="GO:0005829">
    <property type="term" value="C:cytosol"/>
    <property type="evidence" value="ECO:0007669"/>
    <property type="project" value="TreeGrafter"/>
</dbReference>
<dbReference type="GO" id="GO:0005524">
    <property type="term" value="F:ATP binding"/>
    <property type="evidence" value="ECO:0007669"/>
    <property type="project" value="UniProtKB-UniRule"/>
</dbReference>
<dbReference type="GO" id="GO:0004824">
    <property type="term" value="F:lysine-tRNA ligase activity"/>
    <property type="evidence" value="ECO:0007669"/>
    <property type="project" value="UniProtKB-UniRule"/>
</dbReference>
<dbReference type="GO" id="GO:0000287">
    <property type="term" value="F:magnesium ion binding"/>
    <property type="evidence" value="ECO:0007669"/>
    <property type="project" value="UniProtKB-UniRule"/>
</dbReference>
<dbReference type="GO" id="GO:0000049">
    <property type="term" value="F:tRNA binding"/>
    <property type="evidence" value="ECO:0007669"/>
    <property type="project" value="TreeGrafter"/>
</dbReference>
<dbReference type="GO" id="GO:0006430">
    <property type="term" value="P:lysyl-tRNA aminoacylation"/>
    <property type="evidence" value="ECO:0007669"/>
    <property type="project" value="UniProtKB-UniRule"/>
</dbReference>
<dbReference type="CDD" id="cd00775">
    <property type="entry name" value="LysRS_core"/>
    <property type="match status" value="1"/>
</dbReference>
<dbReference type="CDD" id="cd04322">
    <property type="entry name" value="LysRS_N"/>
    <property type="match status" value="1"/>
</dbReference>
<dbReference type="FunFam" id="2.40.50.140:FF:000024">
    <property type="entry name" value="Lysine--tRNA ligase"/>
    <property type="match status" value="1"/>
</dbReference>
<dbReference type="Gene3D" id="3.30.930.10">
    <property type="entry name" value="Bira Bifunctional Protein, Domain 2"/>
    <property type="match status" value="1"/>
</dbReference>
<dbReference type="Gene3D" id="2.40.50.140">
    <property type="entry name" value="Nucleic acid-binding proteins"/>
    <property type="match status" value="1"/>
</dbReference>
<dbReference type="HAMAP" id="MF_00252">
    <property type="entry name" value="Lys_tRNA_synth_class2"/>
    <property type="match status" value="1"/>
</dbReference>
<dbReference type="InterPro" id="IPR004364">
    <property type="entry name" value="Aa-tRNA-synt_II"/>
</dbReference>
<dbReference type="InterPro" id="IPR006195">
    <property type="entry name" value="aa-tRNA-synth_II"/>
</dbReference>
<dbReference type="InterPro" id="IPR045864">
    <property type="entry name" value="aa-tRNA-synth_II/BPL/LPL"/>
</dbReference>
<dbReference type="InterPro" id="IPR002313">
    <property type="entry name" value="Lys-tRNA-ligase_II"/>
</dbReference>
<dbReference type="InterPro" id="IPR044136">
    <property type="entry name" value="Lys-tRNA-ligase_II_N"/>
</dbReference>
<dbReference type="InterPro" id="IPR018149">
    <property type="entry name" value="Lys-tRNA-synth_II_C"/>
</dbReference>
<dbReference type="InterPro" id="IPR012340">
    <property type="entry name" value="NA-bd_OB-fold"/>
</dbReference>
<dbReference type="InterPro" id="IPR004365">
    <property type="entry name" value="NA-bd_OB_tRNA"/>
</dbReference>
<dbReference type="NCBIfam" id="TIGR00499">
    <property type="entry name" value="lysS_bact"/>
    <property type="match status" value="1"/>
</dbReference>
<dbReference type="NCBIfam" id="NF001756">
    <property type="entry name" value="PRK00484.1"/>
    <property type="match status" value="1"/>
</dbReference>
<dbReference type="PANTHER" id="PTHR42918:SF15">
    <property type="entry name" value="LYSINE--TRNA LIGASE, CHLOROPLASTIC_MITOCHONDRIAL"/>
    <property type="match status" value="1"/>
</dbReference>
<dbReference type="PANTHER" id="PTHR42918">
    <property type="entry name" value="LYSYL-TRNA SYNTHETASE"/>
    <property type="match status" value="1"/>
</dbReference>
<dbReference type="Pfam" id="PF00152">
    <property type="entry name" value="tRNA-synt_2"/>
    <property type="match status" value="1"/>
</dbReference>
<dbReference type="Pfam" id="PF01336">
    <property type="entry name" value="tRNA_anti-codon"/>
    <property type="match status" value="1"/>
</dbReference>
<dbReference type="PRINTS" id="PR00982">
    <property type="entry name" value="TRNASYNTHLYS"/>
</dbReference>
<dbReference type="SUPFAM" id="SSF55681">
    <property type="entry name" value="Class II aaRS and biotin synthetases"/>
    <property type="match status" value="1"/>
</dbReference>
<dbReference type="SUPFAM" id="SSF50249">
    <property type="entry name" value="Nucleic acid-binding proteins"/>
    <property type="match status" value="1"/>
</dbReference>
<dbReference type="PROSITE" id="PS50862">
    <property type="entry name" value="AA_TRNA_LIGASE_II"/>
    <property type="match status" value="1"/>
</dbReference>